<protein>
    <recommendedName>
        <fullName>Fibroblast growth factor receptor substrate 3</fullName>
        <shortName>FGFR substrate 3</shortName>
    </recommendedName>
    <alternativeName>
        <fullName>FGFR-signaling adaptor SNT2</fullName>
    </alternativeName>
    <alternativeName>
        <fullName>Suc1-associated neurotrophic factor target 2</fullName>
        <shortName>SNT-2</shortName>
    </alternativeName>
</protein>
<proteinExistence type="evidence at transcript level"/>
<sequence>MGSCCSCLDRDSVPHNHPTKFKVTNVDDEGVELGSGVMELTQSELVLHLHQQEAVRWPYLCLRRYGYDSNLFSFESGRRCQTGQGIFAFKCSRAEEIFNLLQDLMQCNSINVTEEPVIITRNSHPQELDLPRGSSQPTGYTVSSFSNGFPGCPGEGPRFSSAPRRPSTSSLRHPSPGEESTQTLIASDEQSHTYVNTPTGEEDRRSRHCLQPLPEGRVPFPPQTQVSDQRDPQVFLQPGQVKFVLGPTPARRQVMKCQSLCPSMQDPPLHNNNEGPSECPAQPKCTYENVSGGLQQGAGWRLSPEERGWSGLAHRRAALLHYENLPPLPPVWESQVQQLRGEAGDDGDSKDGLTPSSNGFPDGEEDETPLQKPTSTRASARSHSSFPVPLTRRRGSPRVFNFDFRRPGPEPPRQLNYIQVELKGWGTAHPKGPQNPSVSGAPGPTPHPARSSDSYAVIDLKKTVAMSNLQRALPRDDGTVRKTRHNSTDLPL</sequence>
<dbReference type="EMBL" id="AY972083">
    <property type="protein sequence ID" value="AAX84972.1"/>
    <property type="molecule type" value="mRNA"/>
</dbReference>
<dbReference type="RefSeq" id="NP_001017382.1">
    <property type="nucleotide sequence ID" value="NM_001017382.1"/>
</dbReference>
<dbReference type="SMR" id="Q52RG8"/>
<dbReference type="FunCoup" id="Q52RG8">
    <property type="interactions" value="894"/>
</dbReference>
<dbReference type="STRING" id="10116.ENSRNOP00000019404"/>
<dbReference type="GlyGen" id="Q52RG8">
    <property type="glycosylation" value="2 sites"/>
</dbReference>
<dbReference type="iPTMnet" id="Q52RG8"/>
<dbReference type="PhosphoSitePlus" id="Q52RG8"/>
<dbReference type="PaxDb" id="10116-ENSRNOP00000019404"/>
<dbReference type="GeneID" id="316213"/>
<dbReference type="KEGG" id="rno:316213"/>
<dbReference type="UCSC" id="RGD:1310226">
    <property type="organism name" value="rat"/>
</dbReference>
<dbReference type="AGR" id="RGD:1310226"/>
<dbReference type="CTD" id="10817"/>
<dbReference type="RGD" id="1310226">
    <property type="gene designation" value="Frs3"/>
</dbReference>
<dbReference type="eggNOG" id="KOG4047">
    <property type="taxonomic scope" value="Eukaryota"/>
</dbReference>
<dbReference type="InParanoid" id="Q52RG8"/>
<dbReference type="PhylomeDB" id="Q52RG8"/>
<dbReference type="Reactome" id="R-RNO-5654693">
    <property type="pathway name" value="FRS-mediated FGFR1 signaling"/>
</dbReference>
<dbReference type="Reactome" id="R-RNO-5654700">
    <property type="pathway name" value="FRS-mediated FGFR2 signaling"/>
</dbReference>
<dbReference type="Reactome" id="R-RNO-5654706">
    <property type="pathway name" value="FRS-mediated FGFR3 signaling"/>
</dbReference>
<dbReference type="Reactome" id="R-RNO-5654712">
    <property type="pathway name" value="FRS-mediated FGFR4 signaling"/>
</dbReference>
<dbReference type="Reactome" id="R-RNO-5673001">
    <property type="pathway name" value="RAF/MAP kinase cascade"/>
</dbReference>
<dbReference type="Reactome" id="R-RNO-9696270">
    <property type="pathway name" value="RND2 GTPase cycle"/>
</dbReference>
<dbReference type="Reactome" id="R-RNO-9696273">
    <property type="pathway name" value="RND1 GTPase cycle"/>
</dbReference>
<dbReference type="PRO" id="PR:Q52RG8"/>
<dbReference type="Proteomes" id="UP000002494">
    <property type="component" value="Unplaced"/>
</dbReference>
<dbReference type="GO" id="GO:0005737">
    <property type="term" value="C:cytoplasm"/>
    <property type="evidence" value="ECO:0000318"/>
    <property type="project" value="GO_Central"/>
</dbReference>
<dbReference type="GO" id="GO:0005886">
    <property type="term" value="C:plasma membrane"/>
    <property type="evidence" value="ECO:0000304"/>
    <property type="project" value="Reactome"/>
</dbReference>
<dbReference type="GO" id="GO:0005104">
    <property type="term" value="F:fibroblast growth factor receptor binding"/>
    <property type="evidence" value="ECO:0000266"/>
    <property type="project" value="RGD"/>
</dbReference>
<dbReference type="GO" id="GO:0042802">
    <property type="term" value="F:identical protein binding"/>
    <property type="evidence" value="ECO:0000266"/>
    <property type="project" value="RGD"/>
</dbReference>
<dbReference type="GO" id="GO:0005068">
    <property type="term" value="F:transmembrane receptor protein tyrosine kinase adaptor activity"/>
    <property type="evidence" value="ECO:0000318"/>
    <property type="project" value="GO_Central"/>
</dbReference>
<dbReference type="GO" id="GO:0008543">
    <property type="term" value="P:fibroblast growth factor receptor signaling pathway"/>
    <property type="evidence" value="ECO:0000266"/>
    <property type="project" value="RGD"/>
</dbReference>
<dbReference type="CDD" id="cd01202">
    <property type="entry name" value="PTB_FRS2"/>
    <property type="match status" value="1"/>
</dbReference>
<dbReference type="FunFam" id="2.30.29.30:FF:000169">
    <property type="entry name" value="Fibroblast growth factor receptor substrate 2"/>
    <property type="match status" value="1"/>
</dbReference>
<dbReference type="Gene3D" id="2.30.29.30">
    <property type="entry name" value="Pleckstrin-homology domain (PH domain)/Phosphotyrosine-binding domain (PTB)"/>
    <property type="match status" value="1"/>
</dbReference>
<dbReference type="InterPro" id="IPR050996">
    <property type="entry name" value="Docking_Protein_DOK"/>
</dbReference>
<dbReference type="InterPro" id="IPR038742">
    <property type="entry name" value="FRS2_PTB"/>
</dbReference>
<dbReference type="InterPro" id="IPR002404">
    <property type="entry name" value="IRS_PTB"/>
</dbReference>
<dbReference type="InterPro" id="IPR011993">
    <property type="entry name" value="PH-like_dom_sf"/>
</dbReference>
<dbReference type="PANTHER" id="PTHR21258">
    <property type="entry name" value="DOCKING PROTEIN RELATED"/>
    <property type="match status" value="1"/>
</dbReference>
<dbReference type="PANTHER" id="PTHR21258:SF39">
    <property type="entry name" value="FIBROBLAST GROWTH FACTOR RECEPTOR SUBSTRATE 3"/>
    <property type="match status" value="1"/>
</dbReference>
<dbReference type="Pfam" id="PF02174">
    <property type="entry name" value="IRS"/>
    <property type="match status" value="1"/>
</dbReference>
<dbReference type="SMART" id="SM01244">
    <property type="entry name" value="IRS"/>
    <property type="match status" value="1"/>
</dbReference>
<dbReference type="SMART" id="SM00310">
    <property type="entry name" value="PTBI"/>
    <property type="match status" value="1"/>
</dbReference>
<dbReference type="SUPFAM" id="SSF50729">
    <property type="entry name" value="PH domain-like"/>
    <property type="match status" value="1"/>
</dbReference>
<dbReference type="PROSITE" id="PS51064">
    <property type="entry name" value="IRS_PTB"/>
    <property type="match status" value="1"/>
</dbReference>
<organism>
    <name type="scientific">Rattus norvegicus</name>
    <name type="common">Rat</name>
    <dbReference type="NCBI Taxonomy" id="10116"/>
    <lineage>
        <taxon>Eukaryota</taxon>
        <taxon>Metazoa</taxon>
        <taxon>Chordata</taxon>
        <taxon>Craniata</taxon>
        <taxon>Vertebrata</taxon>
        <taxon>Euteleostomi</taxon>
        <taxon>Mammalia</taxon>
        <taxon>Eutheria</taxon>
        <taxon>Euarchontoglires</taxon>
        <taxon>Glires</taxon>
        <taxon>Rodentia</taxon>
        <taxon>Myomorpha</taxon>
        <taxon>Muroidea</taxon>
        <taxon>Muridae</taxon>
        <taxon>Murinae</taxon>
        <taxon>Rattus</taxon>
    </lineage>
</organism>
<gene>
    <name type="primary">Frs3</name>
    <name type="synonym">Snt2</name>
</gene>
<evidence type="ECO:0000250" key="1"/>
<evidence type="ECO:0000255" key="2"/>
<evidence type="ECO:0000255" key="3">
    <source>
        <dbReference type="PROSITE-ProRule" id="PRU00389"/>
    </source>
</evidence>
<evidence type="ECO:0000256" key="4">
    <source>
        <dbReference type="SAM" id="MobiDB-lite"/>
    </source>
</evidence>
<accession>Q52RG8</accession>
<name>FRS3_RAT</name>
<reference key="1">
    <citation type="submission" date="2005-03" db="EMBL/GenBank/DDBJ databases">
        <authorList>
            <person name="Cotton L.M."/>
            <person name="Gibbs G.M."/>
            <person name="Morrison J.R."/>
            <person name="de Kretser D.M."/>
            <person name="O'Bryan M.K."/>
        </authorList>
    </citation>
    <scope>NUCLEOTIDE SEQUENCE [MRNA]</scope>
    <source>
        <strain>Sprague-Dawley</strain>
        <tissue>Testis</tissue>
    </source>
</reference>
<keyword id="KW-0449">Lipoprotein</keyword>
<keyword id="KW-0472">Membrane</keyword>
<keyword id="KW-0519">Myristate</keyword>
<keyword id="KW-0597">Phosphoprotein</keyword>
<keyword id="KW-1185">Reference proteome</keyword>
<comment type="function">
    <text evidence="1">Adapter protein that links FGF and NGF receptors to downstream signaling pathways. Involved in the activation of MAP kinases. Down-regulates ERK2 signaling by interfering with the phosphorylation and nuclear translocation of ERK2 (By similarity).</text>
</comment>
<comment type="subunit">
    <text evidence="1">Binds NTRK1, FGFR1, NGFR, GRB2, PTPN11 and ERK2.</text>
</comment>
<comment type="subcellular location">
    <subcellularLocation>
        <location evidence="1">Membrane</location>
        <topology evidence="1">Lipid-anchor</topology>
    </subcellularLocation>
</comment>
<comment type="PTM">
    <text evidence="1">Phosphorylated on tyrosine residues upon stimulation by BFGF or NGFB.</text>
</comment>
<feature type="initiator methionine" description="Removed" evidence="2">
    <location>
        <position position="1"/>
    </location>
</feature>
<feature type="chain" id="PRO_0000087348" description="Fibroblast growth factor receptor substrate 3">
    <location>
        <begin position="2"/>
        <end position="492"/>
    </location>
</feature>
<feature type="domain" description="IRS-type PTB" evidence="3">
    <location>
        <begin position="13"/>
        <end position="115"/>
    </location>
</feature>
<feature type="region of interest" description="Disordered" evidence="4">
    <location>
        <begin position="125"/>
        <end position="205"/>
    </location>
</feature>
<feature type="region of interest" description="Disordered" evidence="4">
    <location>
        <begin position="337"/>
        <end position="413"/>
    </location>
</feature>
<feature type="region of interest" description="Disordered" evidence="4">
    <location>
        <begin position="425"/>
        <end position="492"/>
    </location>
</feature>
<feature type="compositionally biased region" description="Polar residues" evidence="4">
    <location>
        <begin position="133"/>
        <end position="147"/>
    </location>
</feature>
<feature type="compositionally biased region" description="Polar residues" evidence="4">
    <location>
        <begin position="166"/>
        <end position="185"/>
    </location>
</feature>
<feature type="compositionally biased region" description="Low complexity" evidence="4">
    <location>
        <begin position="374"/>
        <end position="385"/>
    </location>
</feature>
<feature type="lipid moiety-binding region" description="N-myristoyl glycine" evidence="2">
    <location>
        <position position="2"/>
    </location>
</feature>